<reference key="1">
    <citation type="journal article" date="2008" name="BMC Genomics">
        <title>Genomics of an extreme psychrophile, Psychromonas ingrahamii.</title>
        <authorList>
            <person name="Riley M."/>
            <person name="Staley J.T."/>
            <person name="Danchin A."/>
            <person name="Wang T.Z."/>
            <person name="Brettin T.S."/>
            <person name="Hauser L.J."/>
            <person name="Land M.L."/>
            <person name="Thompson L.S."/>
        </authorList>
    </citation>
    <scope>NUCLEOTIDE SEQUENCE [LARGE SCALE GENOMIC DNA]</scope>
    <source>
        <strain>DSM 17664 / CCUG 51855 / 37</strain>
    </source>
</reference>
<comment type="function">
    <text evidence="1">Nucleotide-binding protein.</text>
</comment>
<comment type="similarity">
    <text evidence="1">Belongs to the YajQ family.</text>
</comment>
<protein>
    <recommendedName>
        <fullName evidence="1">Nucleotide-binding protein Ping_2261</fullName>
    </recommendedName>
</protein>
<proteinExistence type="inferred from homology"/>
<accession>A1SWY7</accession>
<feature type="chain" id="PRO_1000051752" description="Nucleotide-binding protein Ping_2261">
    <location>
        <begin position="1"/>
        <end position="160"/>
    </location>
</feature>
<dbReference type="EMBL" id="CP000510">
    <property type="protein sequence ID" value="ABM04002.1"/>
    <property type="molecule type" value="Genomic_DNA"/>
</dbReference>
<dbReference type="RefSeq" id="WP_011770562.1">
    <property type="nucleotide sequence ID" value="NC_008709.1"/>
</dbReference>
<dbReference type="SMR" id="A1SWY7"/>
<dbReference type="KEGG" id="pin:Ping_2261"/>
<dbReference type="eggNOG" id="COG1666">
    <property type="taxonomic scope" value="Bacteria"/>
</dbReference>
<dbReference type="HOGENOM" id="CLU_099839_1_0_6"/>
<dbReference type="OrthoDB" id="9801447at2"/>
<dbReference type="Proteomes" id="UP000000639">
    <property type="component" value="Chromosome"/>
</dbReference>
<dbReference type="GO" id="GO:0005829">
    <property type="term" value="C:cytosol"/>
    <property type="evidence" value="ECO:0007669"/>
    <property type="project" value="TreeGrafter"/>
</dbReference>
<dbReference type="GO" id="GO:0000166">
    <property type="term" value="F:nucleotide binding"/>
    <property type="evidence" value="ECO:0007669"/>
    <property type="project" value="TreeGrafter"/>
</dbReference>
<dbReference type="CDD" id="cd11740">
    <property type="entry name" value="YajQ_like"/>
    <property type="match status" value="1"/>
</dbReference>
<dbReference type="Gene3D" id="3.30.70.860">
    <property type="match status" value="1"/>
</dbReference>
<dbReference type="Gene3D" id="3.30.70.990">
    <property type="entry name" value="YajQ-like, domain 2"/>
    <property type="match status" value="1"/>
</dbReference>
<dbReference type="HAMAP" id="MF_00632">
    <property type="entry name" value="YajQ"/>
    <property type="match status" value="1"/>
</dbReference>
<dbReference type="InterPro" id="IPR007551">
    <property type="entry name" value="DUF520"/>
</dbReference>
<dbReference type="InterPro" id="IPR035571">
    <property type="entry name" value="UPF0234-like_C"/>
</dbReference>
<dbReference type="InterPro" id="IPR035570">
    <property type="entry name" value="UPF0234_N"/>
</dbReference>
<dbReference type="InterPro" id="IPR036183">
    <property type="entry name" value="YajQ-like_sf"/>
</dbReference>
<dbReference type="NCBIfam" id="NF003819">
    <property type="entry name" value="PRK05412.1"/>
    <property type="match status" value="1"/>
</dbReference>
<dbReference type="PANTHER" id="PTHR30476">
    <property type="entry name" value="UPF0234 PROTEIN YAJQ"/>
    <property type="match status" value="1"/>
</dbReference>
<dbReference type="PANTHER" id="PTHR30476:SF0">
    <property type="entry name" value="UPF0234 PROTEIN YAJQ"/>
    <property type="match status" value="1"/>
</dbReference>
<dbReference type="Pfam" id="PF04461">
    <property type="entry name" value="DUF520"/>
    <property type="match status" value="1"/>
</dbReference>
<dbReference type="SUPFAM" id="SSF89963">
    <property type="entry name" value="YajQ-like"/>
    <property type="match status" value="2"/>
</dbReference>
<keyword id="KW-0547">Nucleotide-binding</keyword>
<keyword id="KW-1185">Reference proteome</keyword>
<name>Y2261_PSYIN</name>
<evidence type="ECO:0000255" key="1">
    <source>
        <dbReference type="HAMAP-Rule" id="MF_00632"/>
    </source>
</evidence>
<gene>
    <name type="ordered locus">Ping_2261</name>
</gene>
<organism>
    <name type="scientific">Psychromonas ingrahamii (strain DSM 17664 / CCUG 51855 / 37)</name>
    <dbReference type="NCBI Taxonomy" id="357804"/>
    <lineage>
        <taxon>Bacteria</taxon>
        <taxon>Pseudomonadati</taxon>
        <taxon>Pseudomonadota</taxon>
        <taxon>Gammaproteobacteria</taxon>
        <taxon>Alteromonadales</taxon>
        <taxon>Psychromonadaceae</taxon>
        <taxon>Psychromonas</taxon>
    </lineage>
</organism>
<sequence length="160" mass="18133">MPSFDIVSEIDTSELQNAVDNANRELATRFDFRGVKASLSITNDVAKLSAEHDSQLRQLMDLLRTNLIKRGVDSRAMDPETPNHTGKTWTQVIKFKEGVDQPTSKKLIKLIKDNKMKVQVAVQGEQLRVTGKKRDDLQAVMTLIKGTELDQAFQFNNFRD</sequence>